<gene>
    <name evidence="2" type="primary">tuf1</name>
    <name type="ordered locus">Rxyl_2157</name>
</gene>
<gene>
    <name evidence="2" type="primary">tuf2</name>
    <name type="ordered locus">Rxyl_2170</name>
</gene>
<sequence>MAKGVFERTKPHINVGTIGHVDHGKTTLTAAITKVLAKHVPDDPANKEVAFEQIDNAPEERQRGITIATSHQEYATKNRHYAHVDCPGHADYVKNMITGAAQMDGAILVVSAADGPMPQTREHILLARQVGVPYIVVYLNKADMVDDPELLELVEMEVRELLSEYEFPGDEVPVVVGSALKALEGDEGELGEQSILKLLEALDEYIPEPKRDIDKPFLLAVEDVFSIQGRGTVATGRVEQGKLRLNEEVEIVGIRPTRKTVVTGIEMFNKSMQEAQAGDNIGVLLRGIKRDEIERGQVLAAPGSITPHTRFKAEVYVLSKEEGGRHTPFFSHYRPQFYFRTTDVTGEIFLEEGVEMVMPGDNTVMEVQLISPIAMDEGLNFAIREGGRTVGAGVVTQIIE</sequence>
<proteinExistence type="inferred from homology"/>
<accession>Q1AU14</accession>
<comment type="function">
    <text evidence="2">GTP hydrolase that promotes the GTP-dependent binding of aminoacyl-tRNA to the A-site of ribosomes during protein biosynthesis.</text>
</comment>
<comment type="catalytic activity">
    <reaction evidence="2">
        <text>GTP + H2O = GDP + phosphate + H(+)</text>
        <dbReference type="Rhea" id="RHEA:19669"/>
        <dbReference type="ChEBI" id="CHEBI:15377"/>
        <dbReference type="ChEBI" id="CHEBI:15378"/>
        <dbReference type="ChEBI" id="CHEBI:37565"/>
        <dbReference type="ChEBI" id="CHEBI:43474"/>
        <dbReference type="ChEBI" id="CHEBI:58189"/>
        <dbReference type="EC" id="3.6.5.3"/>
    </reaction>
    <physiologicalReaction direction="left-to-right" evidence="2">
        <dbReference type="Rhea" id="RHEA:19670"/>
    </physiologicalReaction>
</comment>
<comment type="subunit">
    <text evidence="2">Monomer.</text>
</comment>
<comment type="subcellular location">
    <subcellularLocation>
        <location evidence="2">Cytoplasm</location>
    </subcellularLocation>
</comment>
<comment type="similarity">
    <text evidence="2">Belongs to the TRAFAC class translation factor GTPase superfamily. Classic translation factor GTPase family. EF-Tu/EF-1A subfamily.</text>
</comment>
<evidence type="ECO:0000250" key="1"/>
<evidence type="ECO:0000255" key="2">
    <source>
        <dbReference type="HAMAP-Rule" id="MF_00118"/>
    </source>
</evidence>
<organism>
    <name type="scientific">Rubrobacter xylanophilus (strain DSM 9941 / JCM 11954 / NBRC 16129 / PRD-1)</name>
    <dbReference type="NCBI Taxonomy" id="266117"/>
    <lineage>
        <taxon>Bacteria</taxon>
        <taxon>Bacillati</taxon>
        <taxon>Actinomycetota</taxon>
        <taxon>Rubrobacteria</taxon>
        <taxon>Rubrobacterales</taxon>
        <taxon>Rubrobacteraceae</taxon>
        <taxon>Rubrobacter</taxon>
    </lineage>
</organism>
<name>EFTU_RUBXD</name>
<keyword id="KW-0963">Cytoplasm</keyword>
<keyword id="KW-0251">Elongation factor</keyword>
<keyword id="KW-0342">GTP-binding</keyword>
<keyword id="KW-0378">Hydrolase</keyword>
<keyword id="KW-0460">Magnesium</keyword>
<keyword id="KW-0479">Metal-binding</keyword>
<keyword id="KW-0547">Nucleotide-binding</keyword>
<keyword id="KW-0648">Protein biosynthesis</keyword>
<keyword id="KW-1185">Reference proteome</keyword>
<protein>
    <recommendedName>
        <fullName evidence="2">Elongation factor Tu</fullName>
        <shortName evidence="2">EF-Tu</shortName>
        <ecNumber evidence="2">3.6.5.3</ecNumber>
    </recommendedName>
</protein>
<dbReference type="EC" id="3.6.5.3" evidence="2"/>
<dbReference type="EMBL" id="CP000386">
    <property type="protein sequence ID" value="ABG05101.1"/>
    <property type="molecule type" value="Genomic_DNA"/>
</dbReference>
<dbReference type="EMBL" id="CP000386">
    <property type="protein sequence ID" value="ABG05114.1"/>
    <property type="molecule type" value="Genomic_DNA"/>
</dbReference>
<dbReference type="RefSeq" id="WP_011565116.1">
    <property type="nucleotide sequence ID" value="NC_008148.1"/>
</dbReference>
<dbReference type="SMR" id="Q1AU14"/>
<dbReference type="STRING" id="266117.Rxyl_2157"/>
<dbReference type="KEGG" id="rxy:Rxyl_2157"/>
<dbReference type="KEGG" id="rxy:Rxyl_2170"/>
<dbReference type="eggNOG" id="COG0050">
    <property type="taxonomic scope" value="Bacteria"/>
</dbReference>
<dbReference type="HOGENOM" id="CLU_007265_0_0_11"/>
<dbReference type="OrthoDB" id="9803139at2"/>
<dbReference type="PhylomeDB" id="Q1AU14"/>
<dbReference type="Proteomes" id="UP000006637">
    <property type="component" value="Chromosome"/>
</dbReference>
<dbReference type="GO" id="GO:0005829">
    <property type="term" value="C:cytosol"/>
    <property type="evidence" value="ECO:0007669"/>
    <property type="project" value="TreeGrafter"/>
</dbReference>
<dbReference type="GO" id="GO:0005525">
    <property type="term" value="F:GTP binding"/>
    <property type="evidence" value="ECO:0007669"/>
    <property type="project" value="UniProtKB-UniRule"/>
</dbReference>
<dbReference type="GO" id="GO:0003924">
    <property type="term" value="F:GTPase activity"/>
    <property type="evidence" value="ECO:0007669"/>
    <property type="project" value="InterPro"/>
</dbReference>
<dbReference type="GO" id="GO:0003746">
    <property type="term" value="F:translation elongation factor activity"/>
    <property type="evidence" value="ECO:0007669"/>
    <property type="project" value="UniProtKB-UniRule"/>
</dbReference>
<dbReference type="CDD" id="cd01884">
    <property type="entry name" value="EF_Tu"/>
    <property type="match status" value="1"/>
</dbReference>
<dbReference type="CDD" id="cd03697">
    <property type="entry name" value="EFTU_II"/>
    <property type="match status" value="1"/>
</dbReference>
<dbReference type="CDD" id="cd03707">
    <property type="entry name" value="EFTU_III"/>
    <property type="match status" value="1"/>
</dbReference>
<dbReference type="FunFam" id="2.40.30.10:FF:000001">
    <property type="entry name" value="Elongation factor Tu"/>
    <property type="match status" value="1"/>
</dbReference>
<dbReference type="FunFam" id="3.40.50.300:FF:000003">
    <property type="entry name" value="Elongation factor Tu"/>
    <property type="match status" value="1"/>
</dbReference>
<dbReference type="Gene3D" id="3.40.50.300">
    <property type="entry name" value="P-loop containing nucleotide triphosphate hydrolases"/>
    <property type="match status" value="1"/>
</dbReference>
<dbReference type="Gene3D" id="2.40.30.10">
    <property type="entry name" value="Translation factors"/>
    <property type="match status" value="2"/>
</dbReference>
<dbReference type="HAMAP" id="MF_00118_B">
    <property type="entry name" value="EF_Tu_B"/>
    <property type="match status" value="1"/>
</dbReference>
<dbReference type="InterPro" id="IPR041709">
    <property type="entry name" value="EF-Tu_GTP-bd"/>
</dbReference>
<dbReference type="InterPro" id="IPR050055">
    <property type="entry name" value="EF-Tu_GTPase"/>
</dbReference>
<dbReference type="InterPro" id="IPR004161">
    <property type="entry name" value="EFTu-like_2"/>
</dbReference>
<dbReference type="InterPro" id="IPR033720">
    <property type="entry name" value="EFTU_2"/>
</dbReference>
<dbReference type="InterPro" id="IPR031157">
    <property type="entry name" value="G_TR_CS"/>
</dbReference>
<dbReference type="InterPro" id="IPR027417">
    <property type="entry name" value="P-loop_NTPase"/>
</dbReference>
<dbReference type="InterPro" id="IPR005225">
    <property type="entry name" value="Small_GTP-bd"/>
</dbReference>
<dbReference type="InterPro" id="IPR000795">
    <property type="entry name" value="T_Tr_GTP-bd_dom"/>
</dbReference>
<dbReference type="InterPro" id="IPR009000">
    <property type="entry name" value="Transl_B-barrel_sf"/>
</dbReference>
<dbReference type="InterPro" id="IPR009001">
    <property type="entry name" value="Transl_elong_EF1A/Init_IF2_C"/>
</dbReference>
<dbReference type="InterPro" id="IPR004541">
    <property type="entry name" value="Transl_elong_EFTu/EF1A_bac/org"/>
</dbReference>
<dbReference type="InterPro" id="IPR004160">
    <property type="entry name" value="Transl_elong_EFTu/EF1A_C"/>
</dbReference>
<dbReference type="NCBIfam" id="TIGR00485">
    <property type="entry name" value="EF-Tu"/>
    <property type="match status" value="1"/>
</dbReference>
<dbReference type="NCBIfam" id="NF000766">
    <property type="entry name" value="PRK00049.1"/>
    <property type="match status" value="1"/>
</dbReference>
<dbReference type="NCBIfam" id="NF009372">
    <property type="entry name" value="PRK12735.1"/>
    <property type="match status" value="1"/>
</dbReference>
<dbReference type="NCBIfam" id="NF009373">
    <property type="entry name" value="PRK12736.1"/>
    <property type="match status" value="1"/>
</dbReference>
<dbReference type="NCBIfam" id="TIGR00231">
    <property type="entry name" value="small_GTP"/>
    <property type="match status" value="1"/>
</dbReference>
<dbReference type="PANTHER" id="PTHR43721:SF22">
    <property type="entry name" value="ELONGATION FACTOR TU, MITOCHONDRIAL"/>
    <property type="match status" value="1"/>
</dbReference>
<dbReference type="PANTHER" id="PTHR43721">
    <property type="entry name" value="ELONGATION FACTOR TU-RELATED"/>
    <property type="match status" value="1"/>
</dbReference>
<dbReference type="Pfam" id="PF00009">
    <property type="entry name" value="GTP_EFTU"/>
    <property type="match status" value="1"/>
</dbReference>
<dbReference type="Pfam" id="PF03144">
    <property type="entry name" value="GTP_EFTU_D2"/>
    <property type="match status" value="1"/>
</dbReference>
<dbReference type="Pfam" id="PF03143">
    <property type="entry name" value="GTP_EFTU_D3"/>
    <property type="match status" value="1"/>
</dbReference>
<dbReference type="PRINTS" id="PR00315">
    <property type="entry name" value="ELONGATNFCT"/>
</dbReference>
<dbReference type="SUPFAM" id="SSF50465">
    <property type="entry name" value="EF-Tu/eEF-1alpha/eIF2-gamma C-terminal domain"/>
    <property type="match status" value="1"/>
</dbReference>
<dbReference type="SUPFAM" id="SSF52540">
    <property type="entry name" value="P-loop containing nucleoside triphosphate hydrolases"/>
    <property type="match status" value="1"/>
</dbReference>
<dbReference type="SUPFAM" id="SSF50447">
    <property type="entry name" value="Translation proteins"/>
    <property type="match status" value="1"/>
</dbReference>
<dbReference type="PROSITE" id="PS00301">
    <property type="entry name" value="G_TR_1"/>
    <property type="match status" value="1"/>
</dbReference>
<dbReference type="PROSITE" id="PS51722">
    <property type="entry name" value="G_TR_2"/>
    <property type="match status" value="1"/>
</dbReference>
<reference key="1">
    <citation type="submission" date="2006-06" db="EMBL/GenBank/DDBJ databases">
        <title>Complete sequence of Rubrobacter xylanophilus DSM 9941.</title>
        <authorList>
            <consortium name="US DOE Joint Genome Institute"/>
            <person name="Copeland A."/>
            <person name="Lucas S."/>
            <person name="Lapidus A."/>
            <person name="Barry K."/>
            <person name="Detter J.C."/>
            <person name="Glavina del Rio T."/>
            <person name="Hammon N."/>
            <person name="Israni S."/>
            <person name="Dalin E."/>
            <person name="Tice H."/>
            <person name="Pitluck S."/>
            <person name="Munk A.C."/>
            <person name="Brettin T."/>
            <person name="Bruce D."/>
            <person name="Han C."/>
            <person name="Tapia R."/>
            <person name="Gilna P."/>
            <person name="Schmutz J."/>
            <person name="Larimer F."/>
            <person name="Land M."/>
            <person name="Hauser L."/>
            <person name="Kyrpides N."/>
            <person name="Lykidis A."/>
            <person name="da Costa M.S."/>
            <person name="Rainey F.A."/>
            <person name="Empadinhas N."/>
            <person name="Jolivet E."/>
            <person name="Battista J.R."/>
            <person name="Richardson P."/>
        </authorList>
    </citation>
    <scope>NUCLEOTIDE SEQUENCE [LARGE SCALE GENOMIC DNA]</scope>
    <source>
        <strain>DSM 9941 / JCM 11954 / NBRC 16129 / PRD-1</strain>
    </source>
</reference>
<feature type="chain" id="PRO_0000337507" description="Elongation factor Tu">
    <location>
        <begin position="1"/>
        <end position="400"/>
    </location>
</feature>
<feature type="domain" description="tr-type G">
    <location>
        <begin position="10"/>
        <end position="210"/>
    </location>
</feature>
<feature type="region of interest" description="G1" evidence="1">
    <location>
        <begin position="19"/>
        <end position="26"/>
    </location>
</feature>
<feature type="region of interest" description="G2" evidence="1">
    <location>
        <begin position="64"/>
        <end position="68"/>
    </location>
</feature>
<feature type="region of interest" description="G3" evidence="1">
    <location>
        <begin position="85"/>
        <end position="88"/>
    </location>
</feature>
<feature type="region of interest" description="G4" evidence="1">
    <location>
        <begin position="140"/>
        <end position="143"/>
    </location>
</feature>
<feature type="region of interest" description="G5" evidence="1">
    <location>
        <begin position="178"/>
        <end position="180"/>
    </location>
</feature>
<feature type="binding site" evidence="2">
    <location>
        <begin position="19"/>
        <end position="26"/>
    </location>
    <ligand>
        <name>GTP</name>
        <dbReference type="ChEBI" id="CHEBI:37565"/>
    </ligand>
</feature>
<feature type="binding site" evidence="2">
    <location>
        <position position="26"/>
    </location>
    <ligand>
        <name>Mg(2+)</name>
        <dbReference type="ChEBI" id="CHEBI:18420"/>
    </ligand>
</feature>
<feature type="binding site" evidence="2">
    <location>
        <begin position="85"/>
        <end position="89"/>
    </location>
    <ligand>
        <name>GTP</name>
        <dbReference type="ChEBI" id="CHEBI:37565"/>
    </ligand>
</feature>
<feature type="binding site" evidence="2">
    <location>
        <begin position="140"/>
        <end position="143"/>
    </location>
    <ligand>
        <name>GTP</name>
        <dbReference type="ChEBI" id="CHEBI:37565"/>
    </ligand>
</feature>